<feature type="propeptide" id="PRO_0000026880" evidence="1">
    <location>
        <begin position="1"/>
        <end position="10"/>
    </location>
</feature>
<feature type="chain" id="PRO_0000026881" description="Germination protease">
    <location>
        <begin position="11"/>
        <end position="324"/>
    </location>
</feature>
<name>GPR_CALS4</name>
<accession>Q8RB77</accession>
<dbReference type="EC" id="3.4.24.78" evidence="1"/>
<dbReference type="EMBL" id="AE008691">
    <property type="protein sequence ID" value="AAM24202.1"/>
    <property type="molecule type" value="Genomic_DNA"/>
</dbReference>
<dbReference type="SMR" id="Q8RB77"/>
<dbReference type="STRING" id="273068.TTE0946"/>
<dbReference type="MEROPS" id="A25.001"/>
<dbReference type="KEGG" id="tte:TTE0946"/>
<dbReference type="eggNOG" id="COG0680">
    <property type="taxonomic scope" value="Bacteria"/>
</dbReference>
<dbReference type="HOGENOM" id="CLU_055087_1_0_9"/>
<dbReference type="Proteomes" id="UP000000555">
    <property type="component" value="Chromosome"/>
</dbReference>
<dbReference type="GO" id="GO:0004222">
    <property type="term" value="F:metalloendopeptidase activity"/>
    <property type="evidence" value="ECO:0007669"/>
    <property type="project" value="UniProtKB-UniRule"/>
</dbReference>
<dbReference type="GO" id="GO:0006508">
    <property type="term" value="P:proteolysis"/>
    <property type="evidence" value="ECO:0007669"/>
    <property type="project" value="UniProtKB-UniRule"/>
</dbReference>
<dbReference type="GO" id="GO:0009847">
    <property type="term" value="P:spore germination"/>
    <property type="evidence" value="ECO:0007669"/>
    <property type="project" value="UniProtKB-UniRule"/>
</dbReference>
<dbReference type="Gene3D" id="3.40.50.1450">
    <property type="entry name" value="HybD-like"/>
    <property type="match status" value="1"/>
</dbReference>
<dbReference type="HAMAP" id="MF_00626">
    <property type="entry name" value="Germination_prot"/>
    <property type="match status" value="1"/>
</dbReference>
<dbReference type="InterPro" id="IPR023430">
    <property type="entry name" value="Pept_HybD-like_dom_sf"/>
</dbReference>
<dbReference type="InterPro" id="IPR005080">
    <property type="entry name" value="Peptidase_A25"/>
</dbReference>
<dbReference type="NCBIfam" id="TIGR01441">
    <property type="entry name" value="GPR"/>
    <property type="match status" value="1"/>
</dbReference>
<dbReference type="Pfam" id="PF03418">
    <property type="entry name" value="Peptidase_A25"/>
    <property type="match status" value="2"/>
</dbReference>
<dbReference type="PIRSF" id="PIRSF019549">
    <property type="entry name" value="Peptidase_A25"/>
    <property type="match status" value="1"/>
</dbReference>
<dbReference type="SUPFAM" id="SSF53163">
    <property type="entry name" value="HybD-like"/>
    <property type="match status" value="1"/>
</dbReference>
<protein>
    <recommendedName>
        <fullName evidence="1">Germination protease</fullName>
        <ecNumber evidence="1">3.4.24.78</ecNumber>
    </recommendedName>
    <alternativeName>
        <fullName evidence="1">GPR endopeptidase</fullName>
    </alternativeName>
    <alternativeName>
        <fullName evidence="1">Germination proteinase</fullName>
    </alternativeName>
    <alternativeName>
        <fullName evidence="1">Spore protease</fullName>
    </alternativeName>
</protein>
<gene>
    <name evidence="1" type="primary">gpr</name>
    <name type="ordered locus">TTE0946</name>
</gene>
<sequence>MIIVLGIRTDLALEARELYKEREIPGVSIREEGEEGIKITRVKILDERGEKAMGKPVGDYITIEAPGLLERDLDLEERVAKVLANIISELAQLKKDSHVLVVGLGNWNVTPDALGPRVVSNIVVTRHLKEYAPLQFGDEIRSVSAFSPGVLGITGIETAEILKGVVDRVKPDLVITIDALASRRLERLSTTIQISNTGISPGSGVGNRRLSITSESLGVPVIAIGVPTVVDAVTIAHDTIEYLVKELSEQTSKESVFYKVLENMNKQEKYSLIEEVLSPYVQNLVVTPKEIDLLIKNIALVISRGINLALQPGLTEKEMNQLLH</sequence>
<reference key="1">
    <citation type="journal article" date="2002" name="Genome Res.">
        <title>A complete sequence of the T. tengcongensis genome.</title>
        <authorList>
            <person name="Bao Q."/>
            <person name="Tian Y."/>
            <person name="Li W."/>
            <person name="Xu Z."/>
            <person name="Xuan Z."/>
            <person name="Hu S."/>
            <person name="Dong W."/>
            <person name="Yang J."/>
            <person name="Chen Y."/>
            <person name="Xue Y."/>
            <person name="Xu Y."/>
            <person name="Lai X."/>
            <person name="Huang L."/>
            <person name="Dong X."/>
            <person name="Ma Y."/>
            <person name="Ling L."/>
            <person name="Tan H."/>
            <person name="Chen R."/>
            <person name="Wang J."/>
            <person name="Yu J."/>
            <person name="Yang H."/>
        </authorList>
    </citation>
    <scope>NUCLEOTIDE SEQUENCE [LARGE SCALE GENOMIC DNA]</scope>
    <source>
        <strain>DSM 15242 / JCM 11007 / NBRC 100824 / MB4</strain>
    </source>
</reference>
<evidence type="ECO:0000255" key="1">
    <source>
        <dbReference type="HAMAP-Rule" id="MF_00626"/>
    </source>
</evidence>
<keyword id="KW-0378">Hydrolase</keyword>
<keyword id="KW-0645">Protease</keyword>
<keyword id="KW-1185">Reference proteome</keyword>
<keyword id="KW-0865">Zymogen</keyword>
<proteinExistence type="inferred from homology"/>
<comment type="function">
    <text evidence="1">Initiates the rapid degradation of small, acid-soluble proteins during spore germination.</text>
</comment>
<comment type="catalytic activity">
    <reaction evidence="1">
        <text>Endopeptidase action with P4 Glu or Asp, P1 preferably Glu &gt; Asp, P1' hydrophobic and P2' Ala.</text>
        <dbReference type="EC" id="3.4.24.78"/>
    </reaction>
</comment>
<comment type="subunit">
    <text evidence="1">Homotetramer.</text>
</comment>
<comment type="PTM">
    <text evidence="1">Autoproteolytically processed. The inactive tetrameric zymogen termed p46 autoprocesses to a smaller form termed p41, which is active only during spore germination.</text>
</comment>
<comment type="similarity">
    <text evidence="1">Belongs to the peptidase A25 family.</text>
</comment>
<organism>
    <name type="scientific">Caldanaerobacter subterraneus subsp. tengcongensis (strain DSM 15242 / JCM 11007 / NBRC 100824 / MB4)</name>
    <name type="common">Thermoanaerobacter tengcongensis</name>
    <dbReference type="NCBI Taxonomy" id="273068"/>
    <lineage>
        <taxon>Bacteria</taxon>
        <taxon>Bacillati</taxon>
        <taxon>Bacillota</taxon>
        <taxon>Clostridia</taxon>
        <taxon>Thermoanaerobacterales</taxon>
        <taxon>Thermoanaerobacteraceae</taxon>
        <taxon>Caldanaerobacter</taxon>
    </lineage>
</organism>